<protein>
    <recommendedName>
        <fullName>Gamma-crystallin A</fullName>
    </recommendedName>
    <alternativeName>
        <fullName>Gamma-A-crystallin</fullName>
    </alternativeName>
    <alternativeName>
        <fullName>Gamma-crystallin 1-1</fullName>
    </alternativeName>
</protein>
<organism>
    <name type="scientific">Rattus norvegicus</name>
    <name type="common">Rat</name>
    <dbReference type="NCBI Taxonomy" id="10116"/>
    <lineage>
        <taxon>Eukaryota</taxon>
        <taxon>Metazoa</taxon>
        <taxon>Chordata</taxon>
        <taxon>Craniata</taxon>
        <taxon>Vertebrata</taxon>
        <taxon>Euteleostomi</taxon>
        <taxon>Mammalia</taxon>
        <taxon>Eutheria</taxon>
        <taxon>Euarchontoglires</taxon>
        <taxon>Glires</taxon>
        <taxon>Rodentia</taxon>
        <taxon>Myomorpha</taxon>
        <taxon>Muroidea</taxon>
        <taxon>Muridae</taxon>
        <taxon>Murinae</taxon>
        <taxon>Rattus</taxon>
    </lineage>
</organism>
<proteinExistence type="inferred from homology"/>
<reference key="1">
    <citation type="journal article" date="1986" name="J. Mol. Biol.">
        <title>Concerted and divergent evolution within the rat gamma-crystallin gene family.</title>
        <authorList>
            <person name="den Dunnen J.T."/>
            <person name="Moormann R.J.M."/>
            <person name="Lubsen N.H."/>
            <person name="Schoenmakers J.G.G."/>
        </authorList>
    </citation>
    <scope>NUCLEOTIDE SEQUENCE [GENOMIC DNA]</scope>
</reference>
<reference key="2">
    <citation type="journal article" date="1989" name="Gene">
        <title>Nucleotide sequence of the rat gamma-crystallin gene region and comparison with an orthologous human region.</title>
        <authorList>
            <person name="den Dunnen J.T."/>
            <person name="van Neck J.W."/>
            <person name="Cremers F.P.M."/>
            <person name="Lubsen N.H."/>
            <person name="Schoenmakers J.G.G."/>
        </authorList>
    </citation>
    <scope>NUCLEOTIDE SEQUENCE [GENOMIC DNA]</scope>
</reference>
<gene>
    <name type="primary">Cryga</name>
</gene>
<keyword id="KW-0273">Eye lens protein</keyword>
<keyword id="KW-1185">Reference proteome</keyword>
<keyword id="KW-0677">Repeat</keyword>
<evidence type="ECO:0000255" key="1">
    <source>
        <dbReference type="PROSITE-ProRule" id="PRU00028"/>
    </source>
</evidence>
<evidence type="ECO:0000305" key="2"/>
<comment type="function">
    <text>Crystallins are the dominant structural components of the vertebrate eye lens.</text>
</comment>
<comment type="domain">
    <text>Has a two-domain beta-structure, folded into four very similar Greek key motifs.</text>
</comment>
<comment type="miscellaneous">
    <text>There are six different gamma crystallins identified in rat lens.</text>
</comment>
<comment type="similarity">
    <text evidence="2">Belongs to the beta/gamma-crystallin family.</text>
</comment>
<name>CRGA_RAT</name>
<feature type="chain" id="PRO_0000057589" description="Gamma-crystallin A">
    <location>
        <begin position="1"/>
        <end position="174"/>
    </location>
</feature>
<feature type="domain" description="Beta/gamma crystallin 'Greek key' 1" evidence="1">
    <location>
        <begin position="2"/>
        <end position="40"/>
    </location>
</feature>
<feature type="domain" description="Beta/gamma crystallin 'Greek key' 2" evidence="1">
    <location>
        <begin position="41"/>
        <end position="83"/>
    </location>
</feature>
<feature type="domain" description="Beta/gamma crystallin 'Greek key' 3" evidence="1">
    <location>
        <begin position="88"/>
        <end position="128"/>
    </location>
</feature>
<feature type="domain" description="Beta/gamma crystallin 'Greek key' 4" evidence="1">
    <location>
        <begin position="129"/>
        <end position="171"/>
    </location>
</feature>
<feature type="region of interest" description="Connecting peptide">
    <location>
        <begin position="84"/>
        <end position="87"/>
    </location>
</feature>
<feature type="sequence conflict" description="In Ref. 1; no nucleotide entry." evidence="2" ref="1">
    <original>C</original>
    <variation>S</variation>
    <location>
        <position position="16"/>
    </location>
</feature>
<accession>P10065</accession>
<sequence>MGKITFYEDRGFQGRCYECSSDCPNLQTYFSRCNSIRVDSGCWMLYERPNYQGYQYFLRRGDYPDYQQWMGFSDSIRSCRSIPYTSSHRIRLYERDDYRGLVSELTEDCSCIHDRFRLNEIYSMHVLEGSWVLYEMPNYRGRQYLLRPGDYRRYHDWGAMDAKVGSLRRVMDLY</sequence>
<dbReference type="EMBL" id="M19359">
    <property type="protein sequence ID" value="AAA40981.1"/>
    <property type="molecule type" value="Genomic_DNA"/>
</dbReference>
<dbReference type="PIR" id="A24060">
    <property type="entry name" value="A24060"/>
</dbReference>
<dbReference type="RefSeq" id="NP_001074405.1">
    <property type="nucleotide sequence ID" value="NM_001080936.2"/>
</dbReference>
<dbReference type="SMR" id="P10065"/>
<dbReference type="STRING" id="10116.ENSRNOP00000019963"/>
<dbReference type="PaxDb" id="10116-ENSRNOP00000019963"/>
<dbReference type="Ensembl" id="ENSRNOT00000019963.4">
    <property type="protein sequence ID" value="ENSRNOP00000019963.3"/>
    <property type="gene ID" value="ENSRNOG00000046343.3"/>
</dbReference>
<dbReference type="GeneID" id="684028"/>
<dbReference type="KEGG" id="rno:684028"/>
<dbReference type="AGR" id="RGD:1595217"/>
<dbReference type="CTD" id="1418"/>
<dbReference type="RGD" id="1595217">
    <property type="gene designation" value="Cryga"/>
</dbReference>
<dbReference type="eggNOG" id="ENOG502RXJY">
    <property type="taxonomic scope" value="Eukaryota"/>
</dbReference>
<dbReference type="GeneTree" id="ENSGT00940000156190"/>
<dbReference type="HOGENOM" id="CLU_081883_1_1_1"/>
<dbReference type="InParanoid" id="P10065"/>
<dbReference type="OrthoDB" id="26311at9989"/>
<dbReference type="PhylomeDB" id="P10065"/>
<dbReference type="PRO" id="PR:P10065"/>
<dbReference type="Proteomes" id="UP000002494">
    <property type="component" value="Chromosome 9"/>
</dbReference>
<dbReference type="Bgee" id="ENSRNOG00000014790">
    <property type="expression patterns" value="Expressed in kidney and 7 other cell types or tissues"/>
</dbReference>
<dbReference type="GO" id="GO:0005212">
    <property type="term" value="F:structural constituent of eye lens"/>
    <property type="evidence" value="ECO:0000318"/>
    <property type="project" value="GO_Central"/>
</dbReference>
<dbReference type="GO" id="GO:0001654">
    <property type="term" value="P:eye development"/>
    <property type="evidence" value="ECO:0000266"/>
    <property type="project" value="RGD"/>
</dbReference>
<dbReference type="GO" id="GO:0002088">
    <property type="term" value="P:lens development in camera-type eye"/>
    <property type="evidence" value="ECO:0000270"/>
    <property type="project" value="RGD"/>
</dbReference>
<dbReference type="GO" id="GO:0007601">
    <property type="term" value="P:visual perception"/>
    <property type="evidence" value="ECO:0000318"/>
    <property type="project" value="GO_Central"/>
</dbReference>
<dbReference type="FunFam" id="2.60.20.10:FF:000001">
    <property type="entry name" value="Crystallin gamma S"/>
    <property type="match status" value="1"/>
</dbReference>
<dbReference type="FunFam" id="2.60.20.10:FF:000003">
    <property type="entry name" value="Crystallin gamma S"/>
    <property type="match status" value="1"/>
</dbReference>
<dbReference type="Gene3D" id="2.60.20.10">
    <property type="entry name" value="Crystallins"/>
    <property type="match status" value="2"/>
</dbReference>
<dbReference type="InterPro" id="IPR050252">
    <property type="entry name" value="Beta/Gamma-Crystallin"/>
</dbReference>
<dbReference type="InterPro" id="IPR001064">
    <property type="entry name" value="Beta/gamma_crystallin"/>
</dbReference>
<dbReference type="InterPro" id="IPR011024">
    <property type="entry name" value="G_crystallin-like"/>
</dbReference>
<dbReference type="PANTHER" id="PTHR11818">
    <property type="entry name" value="BETA/GAMMA CRYSTALLIN"/>
    <property type="match status" value="1"/>
</dbReference>
<dbReference type="PANTHER" id="PTHR11818:SF123">
    <property type="entry name" value="GAMMA-CRYSTALLIN A"/>
    <property type="match status" value="1"/>
</dbReference>
<dbReference type="Pfam" id="PF00030">
    <property type="entry name" value="Crystall"/>
    <property type="match status" value="2"/>
</dbReference>
<dbReference type="PRINTS" id="PR01367">
    <property type="entry name" value="BGCRYSTALLIN"/>
</dbReference>
<dbReference type="SMART" id="SM00247">
    <property type="entry name" value="XTALbg"/>
    <property type="match status" value="2"/>
</dbReference>
<dbReference type="SUPFAM" id="SSF49695">
    <property type="entry name" value="gamma-Crystallin-like"/>
    <property type="match status" value="1"/>
</dbReference>
<dbReference type="PROSITE" id="PS50915">
    <property type="entry name" value="CRYSTALLIN_BETA_GAMMA"/>
    <property type="match status" value="4"/>
</dbReference>